<evidence type="ECO:0000250" key="1">
    <source>
        <dbReference type="UniProtKB" id="D3ZR10"/>
    </source>
</evidence>
<evidence type="ECO:0000250" key="2">
    <source>
        <dbReference type="UniProtKB" id="Q9UHG0"/>
    </source>
</evidence>
<evidence type="ECO:0000255" key="3">
    <source>
        <dbReference type="PROSITE-ProRule" id="PRU00072"/>
    </source>
</evidence>
<evidence type="ECO:0000256" key="4">
    <source>
        <dbReference type="SAM" id="MobiDB-lite"/>
    </source>
</evidence>
<evidence type="ECO:0000269" key="5">
    <source>
    </source>
</evidence>
<evidence type="ECO:0000269" key="6">
    <source>
    </source>
</evidence>
<evidence type="ECO:0000303" key="7">
    <source>
    </source>
</evidence>
<evidence type="ECO:0000305" key="8"/>
<feature type="chain" id="PRO_0000079805" description="Doublecortin domain-containing protein 2">
    <location>
        <begin position="1"/>
        <end position="475"/>
    </location>
</feature>
<feature type="domain" description="Doublecortin 1" evidence="3">
    <location>
        <begin position="17"/>
        <end position="100"/>
    </location>
</feature>
<feature type="domain" description="Doublecortin 2" evidence="3">
    <location>
        <begin position="139"/>
        <end position="221"/>
    </location>
</feature>
<feature type="region of interest" description="Disordered" evidence="4">
    <location>
        <begin position="234"/>
        <end position="475"/>
    </location>
</feature>
<feature type="compositionally biased region" description="Polar residues" evidence="4">
    <location>
        <begin position="252"/>
        <end position="272"/>
    </location>
</feature>
<feature type="compositionally biased region" description="Basic and acidic residues" evidence="4">
    <location>
        <begin position="353"/>
        <end position="365"/>
    </location>
</feature>
<feature type="compositionally biased region" description="Acidic residues" evidence="4">
    <location>
        <begin position="407"/>
        <end position="425"/>
    </location>
</feature>
<feature type="modified residue" description="Phosphoserine" evidence="1">
    <location>
        <position position="270"/>
    </location>
</feature>
<feature type="splice variant" id="VSP_014672" description="In isoform 2." evidence="7">
    <original>EGIFKAGAERSETRGAAEVQEDEDTQVEVPVDQRPAEIVDEEEDGEKTSKDANQKEDFSAM</original>
    <variation>WLIKVERDTCLRPQLDGNRNRVTALPPYPWSIHTRHMWDAPGEDRWKKVTNKAQPTYGHSM</variation>
    <location>
        <begin position="308"/>
        <end position="368"/>
    </location>
</feature>
<feature type="splice variant" id="VSP_014673" description="In isoform 2." evidence="7">
    <location>
        <begin position="369"/>
        <end position="475"/>
    </location>
</feature>
<feature type="sequence conflict" description="In Ref. 2; CAI24561." evidence="8" ref="2">
    <original>S</original>
    <variation>A</variation>
    <location>
        <position position="398"/>
    </location>
</feature>
<feature type="sequence conflict" description="In Ref. 2; CAI24561." evidence="8" ref="2">
    <original>P</original>
    <variation>S</variation>
    <location>
        <position position="424"/>
    </location>
</feature>
<proteinExistence type="evidence at protein level"/>
<keyword id="KW-0025">Alternative splicing</keyword>
<keyword id="KW-0966">Cell projection</keyword>
<keyword id="KW-0970">Cilium biogenesis/degradation</keyword>
<keyword id="KW-0963">Cytoplasm</keyword>
<keyword id="KW-0206">Cytoskeleton</keyword>
<keyword id="KW-0524">Neurogenesis</keyword>
<keyword id="KW-0597">Phosphoprotein</keyword>
<keyword id="KW-1185">Reference proteome</keyword>
<keyword id="KW-0677">Repeat</keyword>
<comment type="function">
    <text evidence="1 2">Protein that plays a role in the inhibition of canonical Wnt signaling pathway (By similarity). May be involved in neuronal migration during development of the cerebral neocortex (By similarity). Involved in the control of ciliogenesis and ciliary length (By similarity).</text>
</comment>
<comment type="subunit">
    <text evidence="2">Interacts with DVL1, DVL2 and DVL3.</text>
</comment>
<comment type="subcellular location">
    <subcellularLocation>
        <location evidence="2">Cell projection</location>
        <location evidence="2">Cilium</location>
    </subcellularLocation>
    <subcellularLocation>
        <location evidence="2">Cytoplasm</location>
        <location evidence="2">Cytoskeleton</location>
        <location evidence="2">Cilium axoneme</location>
    </subcellularLocation>
    <subcellularLocation>
        <location evidence="1">Cell projection</location>
        <location evidence="1">Kinocilium</location>
    </subcellularLocation>
    <subcellularLocation>
        <location evidence="1">Cytoplasm</location>
        <location evidence="1">Cytoskeleton</location>
    </subcellularLocation>
    <text evidence="2">Localizes to the ciliary axoneme and to mitotic spindle fibers in a cell-cycle-dependent manner.</text>
</comment>
<comment type="alternative products">
    <event type="alternative splicing"/>
    <isoform>
        <id>Q5DU00-1</id>
        <name>1</name>
        <sequence type="displayed"/>
    </isoform>
    <isoform>
        <id>Q5DU00-2</id>
        <name>2</name>
        <sequence type="described" ref="VSP_014672 VSP_014673"/>
    </isoform>
</comment>
<comment type="tissue specificity">
    <text evidence="6">Expressed in hair cells of the inner ear.</text>
</comment>
<comment type="disruption phenotype">
    <text evidence="5">Animals develop periportal hepatic fibrosis with biliary duct proliferation at age 11 months.</text>
</comment>
<comment type="sequence caution" evidence="8">
    <conflict type="erroneous initiation">
        <sequence resource="EMBL-CDS" id="BAD90429"/>
    </conflict>
    <text>Extended N-terminus.</text>
</comment>
<gene>
    <name type="primary">Dcdc2</name>
    <name type="synonym">Dcdc2a</name>
    <name type="synonym">Kiaa1154</name>
</gene>
<accession>Q5DU00</accession>
<accession>Q5SZU0</accession>
<accession>Q80Y99</accession>
<reference key="1">
    <citation type="submission" date="2005-02" db="EMBL/GenBank/DDBJ databases">
        <title>Prediction of the coding sequences of mouse homologues of KIAA gene. The complete nucleotide sequences of mouse KIAA-homologous cDNAs identified by screening of terminal sequences of cDNA clones randomly sampled from size-fractionated libraries.</title>
        <authorList>
            <person name="Okazaki N."/>
            <person name="Kikuno R.F."/>
            <person name="Ohara R."/>
            <person name="Inamoto S."/>
            <person name="Nagase T."/>
            <person name="Ohara O."/>
            <person name="Koga H."/>
        </authorList>
    </citation>
    <scope>NUCLEOTIDE SEQUENCE [LARGE SCALE MRNA] (ISOFORM 1)</scope>
    <source>
        <tissue>Brain</tissue>
    </source>
</reference>
<reference key="2">
    <citation type="journal article" date="2009" name="PLoS Biol.">
        <title>Lineage-specific biology revealed by a finished genome assembly of the mouse.</title>
        <authorList>
            <person name="Church D.M."/>
            <person name="Goodstadt L."/>
            <person name="Hillier L.W."/>
            <person name="Zody M.C."/>
            <person name="Goldstein S."/>
            <person name="She X."/>
            <person name="Bult C.J."/>
            <person name="Agarwala R."/>
            <person name="Cherry J.L."/>
            <person name="DiCuccio M."/>
            <person name="Hlavina W."/>
            <person name="Kapustin Y."/>
            <person name="Meric P."/>
            <person name="Maglott D."/>
            <person name="Birtle Z."/>
            <person name="Marques A.C."/>
            <person name="Graves T."/>
            <person name="Zhou S."/>
            <person name="Teague B."/>
            <person name="Potamousis K."/>
            <person name="Churas C."/>
            <person name="Place M."/>
            <person name="Herschleb J."/>
            <person name="Runnheim R."/>
            <person name="Forrest D."/>
            <person name="Amos-Landgraf J."/>
            <person name="Schwartz D.C."/>
            <person name="Cheng Z."/>
            <person name="Lindblad-Toh K."/>
            <person name="Eichler E.E."/>
            <person name="Ponting C.P."/>
        </authorList>
    </citation>
    <scope>NUCLEOTIDE SEQUENCE [LARGE SCALE GENOMIC DNA]</scope>
    <source>
        <strain>C57BL/6J</strain>
    </source>
</reference>
<reference key="3">
    <citation type="journal article" date="2004" name="Genome Res.">
        <title>The status, quality, and expansion of the NIH full-length cDNA project: the Mammalian Gene Collection (MGC).</title>
        <authorList>
            <consortium name="The MGC Project Team"/>
        </authorList>
    </citation>
    <scope>NUCLEOTIDE SEQUENCE [LARGE SCALE MRNA] (ISOFORM 2)</scope>
    <source>
        <tissue>Olfactory epithelium</tissue>
    </source>
</reference>
<reference key="4">
    <citation type="journal article" date="2010" name="Cell">
        <title>A tissue-specific atlas of mouse protein phosphorylation and expression.</title>
        <authorList>
            <person name="Huttlin E.L."/>
            <person name="Jedrychowski M.P."/>
            <person name="Elias J.E."/>
            <person name="Goswami T."/>
            <person name="Rad R."/>
            <person name="Beausoleil S.A."/>
            <person name="Villen J."/>
            <person name="Haas W."/>
            <person name="Sowa M.E."/>
            <person name="Gygi S.P."/>
        </authorList>
    </citation>
    <scope>IDENTIFICATION BY MASS SPECTROMETRY [LARGE SCALE ANALYSIS]</scope>
    <source>
        <tissue>Pancreas</tissue>
    </source>
</reference>
<reference key="5">
    <citation type="journal article" date="2015" name="Am. J. Hum. Genet.">
        <title>DCDC2 mutations cause a renal-hepatic ciliopathy by disrupting Wnt signaling.</title>
        <authorList>
            <person name="Schueler M."/>
            <person name="Braun D.A."/>
            <person name="Chandrasekar G."/>
            <person name="Gee H.Y."/>
            <person name="Klasson T.D."/>
            <person name="Halbritter J."/>
            <person name="Bieder A."/>
            <person name="Porath J.D."/>
            <person name="Airik R."/>
            <person name="Zhou W."/>
            <person name="LoTurco J.J."/>
            <person name="Che A."/>
            <person name="Otto E.A."/>
            <person name="Boeckenhauer D."/>
            <person name="Sebire N.J."/>
            <person name="Honzik T."/>
            <person name="Harris P.C."/>
            <person name="Koon S.J."/>
            <person name="Gunay-Aygun M."/>
            <person name="Saunier S."/>
            <person name="Zerres K."/>
            <person name="Bruechle N.O."/>
            <person name="Drenth J.P."/>
            <person name="Pelletier L."/>
            <person name="Tapia-Paez I."/>
            <person name="Lifton R.P."/>
            <person name="Giles R.H."/>
            <person name="Kere J."/>
            <person name="Hildebrandt F."/>
        </authorList>
    </citation>
    <scope>DISRUPTION PHENOTYPE</scope>
</reference>
<reference key="6">
    <citation type="journal article" date="2015" name="Hum. Mol. Genet.">
        <title>A missense mutation in DCDC2 causes human recessive deafness DFNB66, likely by interfering with sensory hair cell and supporting cell cilia length regulation.</title>
        <authorList>
            <person name="Grati M."/>
            <person name="Chakchouk I."/>
            <person name="Ma Q."/>
            <person name="Bensaid M."/>
            <person name="Desmidt A."/>
            <person name="Turki N."/>
            <person name="Yan D."/>
            <person name="Baanannou A."/>
            <person name="Mittal R."/>
            <person name="Driss N."/>
            <person name="Blanton S."/>
            <person name="Farooq A."/>
            <person name="Lu Z."/>
            <person name="Liu X.Z."/>
            <person name="Masmoudi S."/>
        </authorList>
    </citation>
    <scope>TISSUE SPECIFICITY</scope>
</reference>
<protein>
    <recommendedName>
        <fullName>Doublecortin domain-containing protein 2</fullName>
    </recommendedName>
</protein>
<organism>
    <name type="scientific">Mus musculus</name>
    <name type="common">Mouse</name>
    <dbReference type="NCBI Taxonomy" id="10090"/>
    <lineage>
        <taxon>Eukaryota</taxon>
        <taxon>Metazoa</taxon>
        <taxon>Chordata</taxon>
        <taxon>Craniata</taxon>
        <taxon>Vertebrata</taxon>
        <taxon>Euteleostomi</taxon>
        <taxon>Mammalia</taxon>
        <taxon>Eutheria</taxon>
        <taxon>Euarchontoglires</taxon>
        <taxon>Glires</taxon>
        <taxon>Rodentia</taxon>
        <taxon>Myomorpha</taxon>
        <taxon>Muroidea</taxon>
        <taxon>Muridae</taxon>
        <taxon>Murinae</taxon>
        <taxon>Mus</taxon>
        <taxon>Mus</taxon>
    </lineage>
</organism>
<sequence>MNGPSSRSSHLSQPVVKSVLVYRNGDPFFAGRRVVIHEKKVSSFDVFLKEVTGGVQAPFGAVRNIYTPRTGHRIRKLDQIESGGNYVAGGPEAFKKLNYLDIGEIKKRPMEAVNTEVKPVIHSRINVSARFRKSLHEPCTIFLIANGDLISPASRLLIPKKALNQWDHVLQMVTEKITLRSGAVHRLYTLEGKLVESGAELENGQFYVAVGRDKFKRLPYSELLFDKSAMRRPYGQKASSLPPMVGSRKSKGSGNYRQSKSTIGSSDNSSPQPLKRKGKKDSNSEKPTKVKQSVKSKTSHQAIPDNGEGIFKAGAERSETRGAAEVQEDEDTQVEVPVDQRPAEIVDEEEDGEKTSKDANQKEDFSAMNGETEDRGGSKAAGTSEQEEGIPDHGEKKSSPSRVNGGTDEENGEELDQVAEELQPTEDEKGKAEGDNSGQDEAGLDAQRPPRPEVTVTSPQENEENEANKASSAVA</sequence>
<dbReference type="EMBL" id="AK220370">
    <property type="protein sequence ID" value="BAD90429.1"/>
    <property type="status" value="ALT_INIT"/>
    <property type="molecule type" value="mRNA"/>
</dbReference>
<dbReference type="EMBL" id="AL589735">
    <property type="protein sequence ID" value="CAI24561.1"/>
    <property type="molecule type" value="Genomic_DNA"/>
</dbReference>
<dbReference type="EMBL" id="BC045136">
    <property type="protein sequence ID" value="AAH45136.1"/>
    <property type="molecule type" value="mRNA"/>
</dbReference>
<dbReference type="CCDS" id="CCDS26386.2">
    <molecule id="Q5DU00-1"/>
</dbReference>
<dbReference type="CCDS" id="CCDS56873.1">
    <molecule id="Q5DU00-2"/>
</dbReference>
<dbReference type="RefSeq" id="NP_001182546.1">
    <molecule id="Q5DU00-2"/>
    <property type="nucleotide sequence ID" value="NM_001195617.1"/>
</dbReference>
<dbReference type="RefSeq" id="NP_808245.2">
    <property type="nucleotide sequence ID" value="NM_177577.3"/>
</dbReference>
<dbReference type="SMR" id="Q5DU00"/>
<dbReference type="CORUM" id="Q5DU00"/>
<dbReference type="FunCoup" id="Q5DU00">
    <property type="interactions" value="237"/>
</dbReference>
<dbReference type="STRING" id="10090.ENSMUSP00000063650"/>
<dbReference type="iPTMnet" id="Q5DU00"/>
<dbReference type="PhosphoSitePlus" id="Q5DU00"/>
<dbReference type="PaxDb" id="10090-ENSMUSP00000063650"/>
<dbReference type="ProteomicsDB" id="279175">
    <molecule id="Q5DU00-1"/>
</dbReference>
<dbReference type="ProteomicsDB" id="279176">
    <molecule id="Q5DU00-2"/>
</dbReference>
<dbReference type="Antibodypedia" id="25259">
    <property type="antibodies" value="249 antibodies from 27 providers"/>
</dbReference>
<dbReference type="Ensembl" id="ENSMUST00000036932.15">
    <molecule id="Q5DU00-2"/>
    <property type="protein sequence ID" value="ENSMUSP00000047641.9"/>
    <property type="gene ID" value="ENSMUSG00000035910.16"/>
</dbReference>
<dbReference type="GeneID" id="195208"/>
<dbReference type="KEGG" id="mmu:195208"/>
<dbReference type="UCSC" id="uc007pwv.1">
    <molecule id="Q5DU00-2"/>
    <property type="organism name" value="mouse"/>
</dbReference>
<dbReference type="AGR" id="MGI:2652818"/>
<dbReference type="CTD" id="195208"/>
<dbReference type="MGI" id="MGI:2652818">
    <property type="gene designation" value="Dcdc2a"/>
</dbReference>
<dbReference type="VEuPathDB" id="HostDB:ENSMUSG00000035910"/>
<dbReference type="eggNOG" id="KOG3757">
    <property type="taxonomic scope" value="Eukaryota"/>
</dbReference>
<dbReference type="GeneTree" id="ENSGT00940000159377"/>
<dbReference type="InParanoid" id="Q5DU00"/>
<dbReference type="OrthoDB" id="1738954at2759"/>
<dbReference type="PhylomeDB" id="Q5DU00"/>
<dbReference type="TreeFam" id="TF338406"/>
<dbReference type="BioGRID-ORCS" id="195208">
    <property type="hits" value="0 hits in 76 CRISPR screens"/>
</dbReference>
<dbReference type="ChiTaRS" id="Dcdc2a">
    <property type="organism name" value="mouse"/>
</dbReference>
<dbReference type="PRO" id="PR:Q5DU00"/>
<dbReference type="Proteomes" id="UP000000589">
    <property type="component" value="Chromosome 13"/>
</dbReference>
<dbReference type="RNAct" id="Q5DU00">
    <property type="molecule type" value="protein"/>
</dbReference>
<dbReference type="Bgee" id="ENSMUSG00000035910">
    <property type="expression patterns" value="Expressed in metanephric cortical collecting duct and 119 other cell types or tissues"/>
</dbReference>
<dbReference type="ExpressionAtlas" id="Q5DU00">
    <property type="expression patterns" value="baseline and differential"/>
</dbReference>
<dbReference type="GO" id="GO:0005930">
    <property type="term" value="C:axoneme"/>
    <property type="evidence" value="ECO:0000250"/>
    <property type="project" value="UniProtKB"/>
</dbReference>
<dbReference type="GO" id="GO:0005929">
    <property type="term" value="C:cilium"/>
    <property type="evidence" value="ECO:0000250"/>
    <property type="project" value="UniProtKB"/>
</dbReference>
<dbReference type="GO" id="GO:0005737">
    <property type="term" value="C:cytoplasm"/>
    <property type="evidence" value="ECO:0000250"/>
    <property type="project" value="UniProtKB"/>
</dbReference>
<dbReference type="GO" id="GO:0060091">
    <property type="term" value="C:kinocilium"/>
    <property type="evidence" value="ECO:0000250"/>
    <property type="project" value="UniProtKB"/>
</dbReference>
<dbReference type="GO" id="GO:0045202">
    <property type="term" value="C:synapse"/>
    <property type="evidence" value="ECO:0007669"/>
    <property type="project" value="GOC"/>
</dbReference>
<dbReference type="GO" id="GO:0060271">
    <property type="term" value="P:cilium assembly"/>
    <property type="evidence" value="ECO:0000250"/>
    <property type="project" value="UniProtKB"/>
</dbReference>
<dbReference type="GO" id="GO:0048813">
    <property type="term" value="P:dendrite morphogenesis"/>
    <property type="evidence" value="ECO:0000316"/>
    <property type="project" value="MGI"/>
</dbReference>
<dbReference type="GO" id="GO:0035556">
    <property type="term" value="P:intracellular signal transduction"/>
    <property type="evidence" value="ECO:0007669"/>
    <property type="project" value="InterPro"/>
</dbReference>
<dbReference type="GO" id="GO:0001764">
    <property type="term" value="P:neuron migration"/>
    <property type="evidence" value="ECO:0000316"/>
    <property type="project" value="MGI"/>
</dbReference>
<dbReference type="GO" id="GO:0019228">
    <property type="term" value="P:neuronal action potential"/>
    <property type="evidence" value="ECO:0000315"/>
    <property type="project" value="MGI"/>
</dbReference>
<dbReference type="GO" id="GO:1902017">
    <property type="term" value="P:regulation of cilium assembly"/>
    <property type="evidence" value="ECO:0000250"/>
    <property type="project" value="UniProtKB"/>
</dbReference>
<dbReference type="GO" id="GO:0030111">
    <property type="term" value="P:regulation of Wnt signaling pathway"/>
    <property type="evidence" value="ECO:0000250"/>
    <property type="project" value="UniProtKB"/>
</dbReference>
<dbReference type="GO" id="GO:0007605">
    <property type="term" value="P:sensory perception of sound"/>
    <property type="evidence" value="ECO:0000315"/>
    <property type="project" value="MGI"/>
</dbReference>
<dbReference type="GO" id="GO:0035249">
    <property type="term" value="P:synaptic transmission, glutamatergic"/>
    <property type="evidence" value="ECO:0000315"/>
    <property type="project" value="MGI"/>
</dbReference>
<dbReference type="GO" id="GO:0008542">
    <property type="term" value="P:visual learning"/>
    <property type="evidence" value="ECO:0000315"/>
    <property type="project" value="MGI"/>
</dbReference>
<dbReference type="CDD" id="cd17152">
    <property type="entry name" value="DCX2_DCDC2"/>
    <property type="match status" value="1"/>
</dbReference>
<dbReference type="FunFam" id="3.10.20.230:FF:000004">
    <property type="entry name" value="Doublecortin domain containing 2"/>
    <property type="match status" value="1"/>
</dbReference>
<dbReference type="FunFam" id="3.10.20.230:FF:000005">
    <property type="entry name" value="Doublecortin domain containing 2"/>
    <property type="match status" value="1"/>
</dbReference>
<dbReference type="Gene3D" id="3.10.20.230">
    <property type="entry name" value="Doublecortin domain"/>
    <property type="match status" value="2"/>
</dbReference>
<dbReference type="InterPro" id="IPR033036">
    <property type="entry name" value="DCDC2_DCX_dom2"/>
</dbReference>
<dbReference type="InterPro" id="IPR003533">
    <property type="entry name" value="Doublecortin_dom"/>
</dbReference>
<dbReference type="InterPro" id="IPR036572">
    <property type="entry name" value="Doublecortin_dom_sf"/>
</dbReference>
<dbReference type="PANTHER" id="PTHR23004">
    <property type="entry name" value="DOUBLECORTIN DOMAIN CONTAINING 2"/>
    <property type="match status" value="1"/>
</dbReference>
<dbReference type="PANTHER" id="PTHR23004:SF5">
    <property type="entry name" value="DOUBLECORTIN DOMAIN-CONTAINING PROTEIN 2"/>
    <property type="match status" value="1"/>
</dbReference>
<dbReference type="Pfam" id="PF03607">
    <property type="entry name" value="DCX"/>
    <property type="match status" value="2"/>
</dbReference>
<dbReference type="SMART" id="SM00537">
    <property type="entry name" value="DCX"/>
    <property type="match status" value="2"/>
</dbReference>
<dbReference type="SUPFAM" id="SSF89837">
    <property type="entry name" value="Doublecortin (DC)"/>
    <property type="match status" value="2"/>
</dbReference>
<dbReference type="PROSITE" id="PS50309">
    <property type="entry name" value="DC"/>
    <property type="match status" value="2"/>
</dbReference>
<name>DCDC2_MOUSE</name>